<gene>
    <name evidence="1" type="primary">chlL</name>
</gene>
<reference key="1">
    <citation type="journal article" date="2006" name="BMC Evol. Biol.">
        <title>The complete chloroplast genome sequence of the chlorophycean green alga Scenedesmus obliquus reveals a compact gene organization and a biased distribution of genes on the two DNA strands.</title>
        <authorList>
            <person name="de Cambiaire J.-C."/>
            <person name="Otis C."/>
            <person name="Lemieux C."/>
            <person name="Turmel M."/>
        </authorList>
    </citation>
    <scope>NUCLEOTIDE SEQUENCE [LARGE SCALE GENOMIC DNA]</scope>
    <source>
        <strain>UTEX 393</strain>
    </source>
</reference>
<dbReference type="EC" id="1.3.7.7" evidence="1"/>
<dbReference type="EMBL" id="DQ396875">
    <property type="protein sequence ID" value="ABD48288.1"/>
    <property type="molecule type" value="Genomic_DNA"/>
</dbReference>
<dbReference type="RefSeq" id="YP_636005.1">
    <property type="nucleotide sequence ID" value="NC_008101.1"/>
</dbReference>
<dbReference type="SMR" id="Q1KVR9"/>
<dbReference type="GeneID" id="4099798"/>
<dbReference type="UniPathway" id="UPA00670"/>
<dbReference type="GO" id="GO:0009507">
    <property type="term" value="C:chloroplast"/>
    <property type="evidence" value="ECO:0007669"/>
    <property type="project" value="UniProtKB-SubCell"/>
</dbReference>
<dbReference type="GO" id="GO:0051539">
    <property type="term" value="F:4 iron, 4 sulfur cluster binding"/>
    <property type="evidence" value="ECO:0007669"/>
    <property type="project" value="UniProtKB-UniRule"/>
</dbReference>
<dbReference type="GO" id="GO:0005524">
    <property type="term" value="F:ATP binding"/>
    <property type="evidence" value="ECO:0007669"/>
    <property type="project" value="UniProtKB-UniRule"/>
</dbReference>
<dbReference type="GO" id="GO:0046872">
    <property type="term" value="F:metal ion binding"/>
    <property type="evidence" value="ECO:0007669"/>
    <property type="project" value="UniProtKB-KW"/>
</dbReference>
<dbReference type="GO" id="GO:0016730">
    <property type="term" value="F:oxidoreductase activity, acting on iron-sulfur proteins as donors"/>
    <property type="evidence" value="ECO:0007669"/>
    <property type="project" value="InterPro"/>
</dbReference>
<dbReference type="GO" id="GO:0016636">
    <property type="term" value="F:oxidoreductase activity, acting on the CH-CH group of donors, iron-sulfur protein as acceptor"/>
    <property type="evidence" value="ECO:0007669"/>
    <property type="project" value="UniProtKB-UniRule"/>
</dbReference>
<dbReference type="GO" id="GO:0036068">
    <property type="term" value="P:light-independent chlorophyll biosynthetic process"/>
    <property type="evidence" value="ECO:0007669"/>
    <property type="project" value="UniProtKB-UniRule"/>
</dbReference>
<dbReference type="GO" id="GO:0019685">
    <property type="term" value="P:photosynthesis, dark reaction"/>
    <property type="evidence" value="ECO:0007669"/>
    <property type="project" value="InterPro"/>
</dbReference>
<dbReference type="CDD" id="cd02032">
    <property type="entry name" value="Bchl-like"/>
    <property type="match status" value="1"/>
</dbReference>
<dbReference type="Gene3D" id="3.40.50.300">
    <property type="entry name" value="P-loop containing nucleotide triphosphate hydrolases"/>
    <property type="match status" value="1"/>
</dbReference>
<dbReference type="HAMAP" id="MF_00355">
    <property type="entry name" value="ChlL_BchL"/>
    <property type="match status" value="1"/>
</dbReference>
<dbReference type="InterPro" id="IPR030655">
    <property type="entry name" value="NifH/chlL_CS"/>
</dbReference>
<dbReference type="InterPro" id="IPR000392">
    <property type="entry name" value="NifH/frxC"/>
</dbReference>
<dbReference type="InterPro" id="IPR027417">
    <property type="entry name" value="P-loop_NTPase"/>
</dbReference>
<dbReference type="InterPro" id="IPR005971">
    <property type="entry name" value="Protochlorophyllide_ATP-bd"/>
</dbReference>
<dbReference type="NCBIfam" id="TIGR01281">
    <property type="entry name" value="DPOR_bchL"/>
    <property type="match status" value="1"/>
</dbReference>
<dbReference type="PANTHER" id="PTHR42864">
    <property type="entry name" value="LIGHT-INDEPENDENT PROTOCHLOROPHYLLIDE REDUCTASE IRON-SULFUR ATP-BINDING PROTEIN"/>
    <property type="match status" value="1"/>
</dbReference>
<dbReference type="PANTHER" id="PTHR42864:SF2">
    <property type="entry name" value="LIGHT-INDEPENDENT PROTOCHLOROPHYLLIDE REDUCTASE IRON-SULFUR ATP-BINDING PROTEIN"/>
    <property type="match status" value="1"/>
</dbReference>
<dbReference type="Pfam" id="PF00142">
    <property type="entry name" value="Fer4_NifH"/>
    <property type="match status" value="1"/>
</dbReference>
<dbReference type="PIRSF" id="PIRSF000363">
    <property type="entry name" value="Nitrogenase_iron"/>
    <property type="match status" value="1"/>
</dbReference>
<dbReference type="PRINTS" id="PR00091">
    <property type="entry name" value="NITROGNASEII"/>
</dbReference>
<dbReference type="SUPFAM" id="SSF52540">
    <property type="entry name" value="P-loop containing nucleoside triphosphate hydrolases"/>
    <property type="match status" value="1"/>
</dbReference>
<dbReference type="PROSITE" id="PS00746">
    <property type="entry name" value="NIFH_FRXC_1"/>
    <property type="match status" value="1"/>
</dbReference>
<dbReference type="PROSITE" id="PS00692">
    <property type="entry name" value="NIFH_FRXC_2"/>
    <property type="match status" value="1"/>
</dbReference>
<dbReference type="PROSITE" id="PS51026">
    <property type="entry name" value="NIFH_FRXC_3"/>
    <property type="match status" value="1"/>
</dbReference>
<proteinExistence type="inferred from homology"/>
<sequence length="289" mass="31812">MKLAVYGKGGIGKSTTSCNISIALAKRGKKVLQIGCDPKSDSTFTLTGFLIPTIIDTLQAKDYHYEDVWPEDVIYQGYAGVDCVEAGGPPAGAGCGGYVVGETVKLLKEFNAFYEYDVILFDVLGDVVCGGFAAPLNYADYCIIVTDNGFDALFAANRITASVREKARTHPLRLAGLIGNRTKKRDLIEKYVETCPMPILEVLPLIEDIRVSRVKGKTLFEMTESEPTLQFVCDFYLNIADQLLTQPEGVIPRELGDRELFNLLSNFYLNSSNSTNTTLKNETNLFDLV</sequence>
<evidence type="ECO:0000255" key="1">
    <source>
        <dbReference type="HAMAP-Rule" id="MF_00355"/>
    </source>
</evidence>
<organism>
    <name type="scientific">Tetradesmus obliquus</name>
    <name type="common">Green alga</name>
    <name type="synonym">Acutodesmus obliquus</name>
    <dbReference type="NCBI Taxonomy" id="3088"/>
    <lineage>
        <taxon>Eukaryota</taxon>
        <taxon>Viridiplantae</taxon>
        <taxon>Chlorophyta</taxon>
        <taxon>core chlorophytes</taxon>
        <taxon>Chlorophyceae</taxon>
        <taxon>CS clade</taxon>
        <taxon>Sphaeropleales</taxon>
        <taxon>Scenedesmaceae</taxon>
        <taxon>Tetradesmus</taxon>
    </lineage>
</organism>
<name>CHLL_TETOB</name>
<comment type="function">
    <text evidence="1">Component of the dark-operative protochlorophyllide reductase (DPOR) that uses Mg-ATP and reduced ferredoxin to reduce ring D of protochlorophyllide (Pchlide) to form chlorophyllide a (Chlide). This reaction is light-independent. The L component serves as a unique electron donor to the NB-component of the complex, and binds Mg-ATP.</text>
</comment>
<comment type="catalytic activity">
    <reaction evidence="1">
        <text>chlorophyllide a + oxidized 2[4Fe-4S]-[ferredoxin] + 2 ADP + 2 phosphate = protochlorophyllide a + reduced 2[4Fe-4S]-[ferredoxin] + 2 ATP + 2 H2O</text>
        <dbReference type="Rhea" id="RHEA:28202"/>
        <dbReference type="Rhea" id="RHEA-COMP:10002"/>
        <dbReference type="Rhea" id="RHEA-COMP:10004"/>
        <dbReference type="ChEBI" id="CHEBI:15377"/>
        <dbReference type="ChEBI" id="CHEBI:30616"/>
        <dbReference type="ChEBI" id="CHEBI:33722"/>
        <dbReference type="ChEBI" id="CHEBI:33723"/>
        <dbReference type="ChEBI" id="CHEBI:43474"/>
        <dbReference type="ChEBI" id="CHEBI:83348"/>
        <dbReference type="ChEBI" id="CHEBI:83350"/>
        <dbReference type="ChEBI" id="CHEBI:456216"/>
        <dbReference type="EC" id="1.3.7.7"/>
    </reaction>
</comment>
<comment type="cofactor">
    <cofactor evidence="1">
        <name>[4Fe-4S] cluster</name>
        <dbReference type="ChEBI" id="CHEBI:49883"/>
    </cofactor>
    <text evidence="1">Binds 1 [4Fe-4S] cluster per dimer.</text>
</comment>
<comment type="pathway">
    <text evidence="1">Porphyrin-containing compound metabolism; chlorophyll biosynthesis (light-independent).</text>
</comment>
<comment type="subunit">
    <text evidence="1">Homodimer. Protochlorophyllide reductase is composed of three subunits; ChlL, ChlN and ChlB.</text>
</comment>
<comment type="subcellular location">
    <subcellularLocation>
        <location>Plastid</location>
        <location>Chloroplast</location>
    </subcellularLocation>
</comment>
<comment type="similarity">
    <text evidence="1">Belongs to the NifH/BchL/ChlL family.</text>
</comment>
<feature type="chain" id="PRO_0000275267" description="Light-independent protochlorophyllide reductase iron-sulfur ATP-binding protein">
    <location>
        <begin position="1"/>
        <end position="289"/>
    </location>
</feature>
<feature type="binding site" evidence="1">
    <location>
        <begin position="10"/>
        <end position="15"/>
    </location>
    <ligand>
        <name>ATP</name>
        <dbReference type="ChEBI" id="CHEBI:30616"/>
    </ligand>
</feature>
<feature type="binding site" evidence="1">
    <location>
        <position position="14"/>
    </location>
    <ligand>
        <name>Mg(2+)</name>
        <dbReference type="ChEBI" id="CHEBI:18420"/>
    </ligand>
</feature>
<feature type="binding site" evidence="1">
    <location>
        <position position="39"/>
    </location>
    <ligand>
        <name>ATP</name>
        <dbReference type="ChEBI" id="CHEBI:30616"/>
    </ligand>
</feature>
<feature type="binding site" evidence="1">
    <location>
        <position position="95"/>
    </location>
    <ligand>
        <name>[4Fe-4S] cluster</name>
        <dbReference type="ChEBI" id="CHEBI:49883"/>
        <note>ligand shared between dimeric partners</note>
    </ligand>
</feature>
<feature type="binding site" evidence="1">
    <location>
        <position position="129"/>
    </location>
    <ligand>
        <name>[4Fe-4S] cluster</name>
        <dbReference type="ChEBI" id="CHEBI:49883"/>
        <note>ligand shared between dimeric partners</note>
    </ligand>
</feature>
<feature type="binding site" evidence="1">
    <location>
        <begin position="180"/>
        <end position="181"/>
    </location>
    <ligand>
        <name>ATP</name>
        <dbReference type="ChEBI" id="CHEBI:30616"/>
    </ligand>
</feature>
<protein>
    <recommendedName>
        <fullName evidence="1">Light-independent protochlorophyllide reductase iron-sulfur ATP-binding protein</fullName>
        <shortName evidence="1">DPOR subunit L</shortName>
        <shortName evidence="1">LI-POR subunit L</shortName>
        <ecNumber evidence="1">1.3.7.7</ecNumber>
    </recommendedName>
</protein>
<keyword id="KW-0004">4Fe-4S</keyword>
<keyword id="KW-0067">ATP-binding</keyword>
<keyword id="KW-0149">Chlorophyll biosynthesis</keyword>
<keyword id="KW-0150">Chloroplast</keyword>
<keyword id="KW-0408">Iron</keyword>
<keyword id="KW-0411">Iron-sulfur</keyword>
<keyword id="KW-0460">Magnesium</keyword>
<keyword id="KW-0479">Metal-binding</keyword>
<keyword id="KW-0547">Nucleotide-binding</keyword>
<keyword id="KW-0560">Oxidoreductase</keyword>
<keyword id="KW-0602">Photosynthesis</keyword>
<keyword id="KW-0934">Plastid</keyword>
<accession>Q1KVR9</accession>
<geneLocation type="chloroplast"/>